<keyword id="KW-0378">Hydrolase</keyword>
<organism>
    <name type="scientific">Geobacillus thermodenitrificans (strain NG80-2)</name>
    <dbReference type="NCBI Taxonomy" id="420246"/>
    <lineage>
        <taxon>Bacteria</taxon>
        <taxon>Bacillati</taxon>
        <taxon>Bacillota</taxon>
        <taxon>Bacilli</taxon>
        <taxon>Bacillales</taxon>
        <taxon>Anoxybacillaceae</taxon>
        <taxon>Geobacillus</taxon>
    </lineage>
</organism>
<proteinExistence type="inferred from homology"/>
<sequence length="309" mass="33773">MPVYNKEELVRFVEEAKQYARYGKVADYIPALGKANPNELSIAVYTADGKVVDAGDVTVKVTLQSISKILALALVLIDRGEDEVFRKVGMEPTGDPFNSIAKLEEVQPSKPLNPMINAGALAVTHMIRGRSVEERLERLLAFIRRLAGNEQITYSEEVAQSEFETAFLNRSLCYFLKQHGIIDEDVEELMDLYTKQCAVEMTCIDLARIGLVFALDGRDPHSGELLMPLDVARICKTFMVTCGMYNASGEFAIKIGIPAKSGVSGGILAAVPGRCGIGIFGPALDDKGNSLTGVKLLERLSKTYSLSIF</sequence>
<feature type="chain" id="PRO_1000048337" description="Glutaminase">
    <location>
        <begin position="1"/>
        <end position="309"/>
    </location>
</feature>
<feature type="binding site" evidence="1">
    <location>
        <position position="65"/>
    </location>
    <ligand>
        <name>substrate</name>
    </ligand>
</feature>
<feature type="binding site" evidence="1">
    <location>
        <position position="117"/>
    </location>
    <ligand>
        <name>substrate</name>
    </ligand>
</feature>
<feature type="binding site" evidence="1">
    <location>
        <position position="162"/>
    </location>
    <ligand>
        <name>substrate</name>
    </ligand>
</feature>
<feature type="binding site" evidence="1">
    <location>
        <position position="169"/>
    </location>
    <ligand>
        <name>substrate</name>
    </ligand>
</feature>
<feature type="binding site" evidence="1">
    <location>
        <position position="193"/>
    </location>
    <ligand>
        <name>substrate</name>
    </ligand>
</feature>
<feature type="binding site" evidence="1">
    <location>
        <position position="245"/>
    </location>
    <ligand>
        <name>substrate</name>
    </ligand>
</feature>
<feature type="binding site" evidence="1">
    <location>
        <position position="263"/>
    </location>
    <ligand>
        <name>substrate</name>
    </ligand>
</feature>
<protein>
    <recommendedName>
        <fullName evidence="1">Glutaminase</fullName>
        <ecNumber evidence="1">3.5.1.2</ecNumber>
    </recommendedName>
</protein>
<accession>A4IPX2</accession>
<dbReference type="EC" id="3.5.1.2" evidence="1"/>
<dbReference type="EMBL" id="CP000557">
    <property type="protein sequence ID" value="ABO67376.1"/>
    <property type="molecule type" value="Genomic_DNA"/>
</dbReference>
<dbReference type="RefSeq" id="WP_011887640.1">
    <property type="nucleotide sequence ID" value="NC_009328.1"/>
</dbReference>
<dbReference type="SMR" id="A4IPX2"/>
<dbReference type="KEGG" id="gtn:GTNG_2024"/>
<dbReference type="eggNOG" id="COG2066">
    <property type="taxonomic scope" value="Bacteria"/>
</dbReference>
<dbReference type="HOGENOM" id="CLU_027932_1_0_9"/>
<dbReference type="BRENDA" id="3.5.1.2">
    <property type="organism ID" value="705"/>
</dbReference>
<dbReference type="Proteomes" id="UP000001578">
    <property type="component" value="Chromosome"/>
</dbReference>
<dbReference type="GO" id="GO:0004359">
    <property type="term" value="F:glutaminase activity"/>
    <property type="evidence" value="ECO:0007669"/>
    <property type="project" value="UniProtKB-UniRule"/>
</dbReference>
<dbReference type="GO" id="GO:0006537">
    <property type="term" value="P:glutamate biosynthetic process"/>
    <property type="evidence" value="ECO:0007669"/>
    <property type="project" value="TreeGrafter"/>
</dbReference>
<dbReference type="GO" id="GO:0006543">
    <property type="term" value="P:glutamine catabolic process"/>
    <property type="evidence" value="ECO:0007669"/>
    <property type="project" value="TreeGrafter"/>
</dbReference>
<dbReference type="FunFam" id="3.40.710.10:FF:000005">
    <property type="entry name" value="Glutaminase"/>
    <property type="match status" value="1"/>
</dbReference>
<dbReference type="Gene3D" id="3.40.710.10">
    <property type="entry name" value="DD-peptidase/beta-lactamase superfamily"/>
    <property type="match status" value="1"/>
</dbReference>
<dbReference type="HAMAP" id="MF_00313">
    <property type="entry name" value="Glutaminase"/>
    <property type="match status" value="1"/>
</dbReference>
<dbReference type="InterPro" id="IPR012338">
    <property type="entry name" value="Beta-lactam/transpept-like"/>
</dbReference>
<dbReference type="InterPro" id="IPR015868">
    <property type="entry name" value="Glutaminase"/>
</dbReference>
<dbReference type="NCBIfam" id="TIGR03814">
    <property type="entry name" value="Gln_ase"/>
    <property type="match status" value="1"/>
</dbReference>
<dbReference type="PANTHER" id="PTHR12544">
    <property type="entry name" value="GLUTAMINASE"/>
    <property type="match status" value="1"/>
</dbReference>
<dbReference type="PANTHER" id="PTHR12544:SF29">
    <property type="entry name" value="GLUTAMINASE"/>
    <property type="match status" value="1"/>
</dbReference>
<dbReference type="Pfam" id="PF04960">
    <property type="entry name" value="Glutaminase"/>
    <property type="match status" value="1"/>
</dbReference>
<dbReference type="SUPFAM" id="SSF56601">
    <property type="entry name" value="beta-lactamase/transpeptidase-like"/>
    <property type="match status" value="1"/>
</dbReference>
<name>GLSA_GEOTN</name>
<comment type="catalytic activity">
    <reaction evidence="1">
        <text>L-glutamine + H2O = L-glutamate + NH4(+)</text>
        <dbReference type="Rhea" id="RHEA:15889"/>
        <dbReference type="ChEBI" id="CHEBI:15377"/>
        <dbReference type="ChEBI" id="CHEBI:28938"/>
        <dbReference type="ChEBI" id="CHEBI:29985"/>
        <dbReference type="ChEBI" id="CHEBI:58359"/>
        <dbReference type="EC" id="3.5.1.2"/>
    </reaction>
</comment>
<comment type="subunit">
    <text evidence="1">Homotetramer.</text>
</comment>
<comment type="similarity">
    <text evidence="1">Belongs to the glutaminase family.</text>
</comment>
<gene>
    <name evidence="1" type="primary">glsA</name>
    <name type="ordered locus">GTNG_2024</name>
</gene>
<reference key="1">
    <citation type="journal article" date="2007" name="Proc. Natl. Acad. Sci. U.S.A.">
        <title>Genome and proteome of long-chain alkane degrading Geobacillus thermodenitrificans NG80-2 isolated from a deep-subsurface oil reservoir.</title>
        <authorList>
            <person name="Feng L."/>
            <person name="Wang W."/>
            <person name="Cheng J."/>
            <person name="Ren Y."/>
            <person name="Zhao G."/>
            <person name="Gao C."/>
            <person name="Tang Y."/>
            <person name="Liu X."/>
            <person name="Han W."/>
            <person name="Peng X."/>
            <person name="Liu R."/>
            <person name="Wang L."/>
        </authorList>
    </citation>
    <scope>NUCLEOTIDE SEQUENCE [LARGE SCALE GENOMIC DNA]</scope>
    <source>
        <strain>NG80-2</strain>
    </source>
</reference>
<evidence type="ECO:0000255" key="1">
    <source>
        <dbReference type="HAMAP-Rule" id="MF_00313"/>
    </source>
</evidence>